<feature type="signal peptide" evidence="5">
    <location>
        <begin position="1"/>
        <end position="31"/>
    </location>
</feature>
<feature type="chain" id="PRO_0000024309" description="Serine/threonine-protein kinase BRI1-like 2">
    <location>
        <begin position="32"/>
        <end position="1143"/>
    </location>
</feature>
<feature type="topological domain" description="Extracellular" evidence="5">
    <location>
        <begin position="32"/>
        <end position="756"/>
    </location>
</feature>
<feature type="transmembrane region" description="Helical" evidence="5">
    <location>
        <begin position="757"/>
        <end position="777"/>
    </location>
</feature>
<feature type="topological domain" description="Cytoplasmic" evidence="5">
    <location>
        <begin position="778"/>
        <end position="1143"/>
    </location>
</feature>
<feature type="repeat" description="LRR 1" evidence="5">
    <location>
        <begin position="77"/>
        <end position="101"/>
    </location>
</feature>
<feature type="repeat" description="LRR 2" evidence="5">
    <location>
        <begin position="102"/>
        <end position="125"/>
    </location>
</feature>
<feature type="repeat" description="LRR 3" evidence="5">
    <location>
        <begin position="126"/>
        <end position="150"/>
    </location>
</feature>
<feature type="repeat" description="LRR 4" evidence="5">
    <location>
        <begin position="151"/>
        <end position="175"/>
    </location>
</feature>
<feature type="repeat" description="LRR 5" evidence="5">
    <location>
        <begin position="177"/>
        <end position="200"/>
    </location>
</feature>
<feature type="repeat" description="LRR 6" evidence="5">
    <location>
        <begin position="203"/>
        <end position="227"/>
    </location>
</feature>
<feature type="repeat" description="LRR 7" evidence="5">
    <location>
        <begin position="228"/>
        <end position="250"/>
    </location>
</feature>
<feature type="repeat" description="LRR 8" evidence="5">
    <location>
        <begin position="251"/>
        <end position="275"/>
    </location>
</feature>
<feature type="repeat" description="LRR 9" evidence="5">
    <location>
        <begin position="277"/>
        <end position="299"/>
    </location>
</feature>
<feature type="repeat" description="LRR 10" evidence="5">
    <location>
        <begin position="300"/>
        <end position="324"/>
    </location>
</feature>
<feature type="repeat" description="LRR 11" evidence="5">
    <location>
        <begin position="326"/>
        <end position="349"/>
    </location>
</feature>
<feature type="repeat" description="LRR 12" evidence="5">
    <location>
        <begin position="351"/>
        <end position="373"/>
    </location>
</feature>
<feature type="repeat" description="LRR 13" evidence="5">
    <location>
        <begin position="374"/>
        <end position="398"/>
    </location>
</feature>
<feature type="repeat" description="LRR 14" evidence="5">
    <location>
        <begin position="399"/>
        <end position="422"/>
    </location>
</feature>
<feature type="repeat" description="LRR 15" evidence="5">
    <location>
        <begin position="424"/>
        <end position="446"/>
    </location>
</feature>
<feature type="repeat" description="LRR 16" evidence="5">
    <location>
        <begin position="447"/>
        <end position="470"/>
    </location>
</feature>
<feature type="repeat" description="LRR 17" evidence="5">
    <location>
        <begin position="472"/>
        <end position="493"/>
    </location>
</feature>
<feature type="repeat" description="LRR 18" evidence="5">
    <location>
        <begin position="494"/>
        <end position="518"/>
    </location>
</feature>
<feature type="repeat" description="LRR 19" evidence="5">
    <location>
        <begin position="520"/>
        <end position="542"/>
    </location>
</feature>
<feature type="repeat" description="LRR 20" evidence="5">
    <location>
        <begin position="570"/>
        <end position="594"/>
    </location>
</feature>
<feature type="repeat" description="LRR 21" evidence="5">
    <location>
        <begin position="610"/>
        <end position="634"/>
    </location>
</feature>
<feature type="repeat" description="LRR 22" evidence="5">
    <location>
        <begin position="635"/>
        <end position="660"/>
    </location>
</feature>
<feature type="repeat" description="LRR 23" evidence="5">
    <location>
        <begin position="662"/>
        <end position="681"/>
    </location>
</feature>
<feature type="repeat" description="LRR 24" evidence="5">
    <location>
        <begin position="682"/>
        <end position="707"/>
    </location>
</feature>
<feature type="domain" description="Protein kinase" evidence="6">
    <location>
        <begin position="838"/>
        <end position="1129"/>
    </location>
</feature>
<feature type="short sequence motif" description="Cys pair 1">
    <location>
        <begin position="68"/>
        <end position="75"/>
    </location>
</feature>
<feature type="short sequence motif" description="Cys pair 2">
    <location>
        <begin position="720"/>
        <end position="727"/>
    </location>
</feature>
<feature type="active site" description="Proton acceptor" evidence="6 8">
    <location>
        <position position="966"/>
    </location>
</feature>
<feature type="binding site" evidence="6">
    <location>
        <begin position="844"/>
        <end position="852"/>
    </location>
    <ligand>
        <name>ATP</name>
        <dbReference type="ChEBI" id="CHEBI:30616"/>
    </ligand>
</feature>
<feature type="binding site" evidence="6">
    <location>
        <position position="866"/>
    </location>
    <ligand>
        <name>ATP</name>
        <dbReference type="ChEBI" id="CHEBI:30616"/>
    </ligand>
</feature>
<feature type="modified residue" description="Phosphothreonine" evidence="3">
    <location>
        <position position="835"/>
    </location>
</feature>
<feature type="modified residue" description="Phosphotyrosine" evidence="3">
    <location>
        <position position="911"/>
    </location>
</feature>
<feature type="modified residue" description="Phosphoserine" evidence="4">
    <location>
        <position position="1001"/>
    </location>
</feature>
<feature type="modified residue" description="Phosphotyrosine" evidence="2">
    <location>
        <position position="1009"/>
    </location>
</feature>
<feature type="glycosylation site" description="N-linked (GlcNAc...) asparagine" evidence="7">
    <location>
        <position position="84"/>
    </location>
</feature>
<feature type="glycosylation site" description="N-linked (GlcNAc...) asparagine" evidence="7">
    <location>
        <position position="118"/>
    </location>
</feature>
<feature type="glycosylation site" description="N-linked (GlcNAc...) asparagine" evidence="7">
    <location>
        <position position="163"/>
    </location>
</feature>
<feature type="glycosylation site" description="N-linked (GlcNAc...) asparagine" evidence="7">
    <location>
        <position position="188"/>
    </location>
</feature>
<feature type="glycosylation site" description="N-linked (GlcNAc...) asparagine" evidence="7">
    <location>
        <position position="226"/>
    </location>
</feature>
<feature type="glycosylation site" description="N-linked (GlcNAc...) asparagine" evidence="7">
    <location>
        <position position="234"/>
    </location>
</feature>
<feature type="glycosylation site" description="N-linked (GlcNAc...) asparagine" evidence="7">
    <location>
        <position position="288"/>
    </location>
</feature>
<feature type="glycosylation site" description="N-linked (GlcNAc...) asparagine" evidence="7">
    <location>
        <position position="312"/>
    </location>
</feature>
<feature type="glycosylation site" description="N-linked (GlcNAc...) asparagine" evidence="7">
    <location>
        <position position="412"/>
    </location>
</feature>
<feature type="glycosylation site" description="N-linked (GlcNAc...) asparagine" evidence="7">
    <location>
        <position position="469"/>
    </location>
</feature>
<feature type="glycosylation site" description="N-linked (GlcNAc...) asparagine" evidence="7">
    <location>
        <position position="506"/>
    </location>
</feature>
<feature type="glycosylation site" description="N-linked (GlcNAc...) asparagine" evidence="7">
    <location>
        <position position="681"/>
    </location>
</feature>
<dbReference type="EC" id="2.7.11.1" evidence="6 9 11"/>
<dbReference type="EMBL" id="AC006532">
    <property type="protein sequence ID" value="AAD20088.1"/>
    <property type="molecule type" value="Genomic_DNA"/>
</dbReference>
<dbReference type="EMBL" id="CP002685">
    <property type="protein sequence ID" value="AEC05526.1"/>
    <property type="molecule type" value="Genomic_DNA"/>
</dbReference>
<dbReference type="EMBL" id="AY074313">
    <property type="protein sequence ID" value="AAL67010.1"/>
    <property type="molecule type" value="mRNA"/>
</dbReference>
<dbReference type="PIR" id="B84431">
    <property type="entry name" value="B84431"/>
</dbReference>
<dbReference type="RefSeq" id="NP_178304.1">
    <property type="nucleotide sequence ID" value="NM_126256.4"/>
</dbReference>
<dbReference type="SMR" id="Q9ZPS9"/>
<dbReference type="BioGRID" id="129">
    <property type="interactions" value="91"/>
</dbReference>
<dbReference type="FunCoup" id="Q9ZPS9">
    <property type="interactions" value="630"/>
</dbReference>
<dbReference type="IntAct" id="Q9ZPS9">
    <property type="interactions" value="91"/>
</dbReference>
<dbReference type="STRING" id="3702.Q9ZPS9"/>
<dbReference type="GlyCosmos" id="Q9ZPS9">
    <property type="glycosylation" value="12 sites, No reported glycans"/>
</dbReference>
<dbReference type="GlyGen" id="Q9ZPS9">
    <property type="glycosylation" value="12 sites"/>
</dbReference>
<dbReference type="PaxDb" id="3702-AT2G01950.1"/>
<dbReference type="ProteomicsDB" id="240704"/>
<dbReference type="EnsemblPlants" id="AT2G01950.1">
    <property type="protein sequence ID" value="AT2G01950.1"/>
    <property type="gene ID" value="AT2G01950"/>
</dbReference>
<dbReference type="GeneID" id="814726"/>
<dbReference type="Gramene" id="AT2G01950.1">
    <property type="protein sequence ID" value="AT2G01950.1"/>
    <property type="gene ID" value="AT2G01950"/>
</dbReference>
<dbReference type="KEGG" id="ath:AT2G01950"/>
<dbReference type="Araport" id="AT2G01950"/>
<dbReference type="TAIR" id="AT2G01950">
    <property type="gene designation" value="BRL2"/>
</dbReference>
<dbReference type="eggNOG" id="ENOG502QS1K">
    <property type="taxonomic scope" value="Eukaryota"/>
</dbReference>
<dbReference type="HOGENOM" id="CLU_000288_22_1_1"/>
<dbReference type="InParanoid" id="Q9ZPS9"/>
<dbReference type="OMA" id="DGFLACY"/>
<dbReference type="PhylomeDB" id="Q9ZPS9"/>
<dbReference type="PRO" id="PR:Q9ZPS9"/>
<dbReference type="Proteomes" id="UP000006548">
    <property type="component" value="Chromosome 2"/>
</dbReference>
<dbReference type="ExpressionAtlas" id="Q9ZPS9">
    <property type="expression patterns" value="baseline and differential"/>
</dbReference>
<dbReference type="GO" id="GO:0005886">
    <property type="term" value="C:plasma membrane"/>
    <property type="evidence" value="ECO:0007669"/>
    <property type="project" value="UniProtKB-SubCell"/>
</dbReference>
<dbReference type="GO" id="GO:0005524">
    <property type="term" value="F:ATP binding"/>
    <property type="evidence" value="ECO:0007669"/>
    <property type="project" value="UniProtKB-KW"/>
</dbReference>
<dbReference type="GO" id="GO:0106310">
    <property type="term" value="F:protein serine kinase activity"/>
    <property type="evidence" value="ECO:0007669"/>
    <property type="project" value="RHEA"/>
</dbReference>
<dbReference type="GO" id="GO:0004675">
    <property type="term" value="F:transmembrane receptor protein serine/threonine kinase activity"/>
    <property type="evidence" value="ECO:0000250"/>
    <property type="project" value="TAIR"/>
</dbReference>
<dbReference type="GO" id="GO:0009734">
    <property type="term" value="P:auxin-activated signaling pathway"/>
    <property type="evidence" value="ECO:0000315"/>
    <property type="project" value="TAIR"/>
</dbReference>
<dbReference type="GO" id="GO:0009742">
    <property type="term" value="P:brassinosteroid mediated signaling pathway"/>
    <property type="evidence" value="ECO:0000315"/>
    <property type="project" value="TAIR"/>
</dbReference>
<dbReference type="GO" id="GO:0010305">
    <property type="term" value="P:leaf vascular tissue pattern formation"/>
    <property type="evidence" value="ECO:0000315"/>
    <property type="project" value="TAIR"/>
</dbReference>
<dbReference type="GO" id="GO:0010233">
    <property type="term" value="P:phloem transport"/>
    <property type="evidence" value="ECO:0000314"/>
    <property type="project" value="TAIR"/>
</dbReference>
<dbReference type="GO" id="GO:0010051">
    <property type="term" value="P:xylem and phloem pattern formation"/>
    <property type="evidence" value="ECO:0000315"/>
    <property type="project" value="TAIR"/>
</dbReference>
<dbReference type="CDD" id="cd14066">
    <property type="entry name" value="STKc_IRAK"/>
    <property type="match status" value="1"/>
</dbReference>
<dbReference type="FunFam" id="3.80.10.10:FF:000383">
    <property type="entry name" value="Leucine-rich repeat receptor protein kinase EMS1"/>
    <property type="match status" value="1"/>
</dbReference>
<dbReference type="FunFam" id="3.80.10.10:FF:000041">
    <property type="entry name" value="LRR receptor-like serine/threonine-protein kinase ERECTA"/>
    <property type="match status" value="1"/>
</dbReference>
<dbReference type="FunFam" id="3.80.10.10:FF:000111">
    <property type="entry name" value="LRR receptor-like serine/threonine-protein kinase ERECTA"/>
    <property type="match status" value="1"/>
</dbReference>
<dbReference type="FunFam" id="3.80.10.10:FF:000095">
    <property type="entry name" value="LRR receptor-like serine/threonine-protein kinase GSO1"/>
    <property type="match status" value="1"/>
</dbReference>
<dbReference type="FunFam" id="1.10.510.10:FF:000526">
    <property type="entry name" value="serine/threonine-protein kinase BRI1-like 2"/>
    <property type="match status" value="1"/>
</dbReference>
<dbReference type="FunFam" id="3.30.200.20:FF:000150">
    <property type="entry name" value="serine/threonine-protein kinase BRI1-like 2"/>
    <property type="match status" value="1"/>
</dbReference>
<dbReference type="FunFam" id="3.80.10.10:FF:000815">
    <property type="entry name" value="serine/threonine-protein kinase BRI1-like 2"/>
    <property type="match status" value="1"/>
</dbReference>
<dbReference type="Gene3D" id="3.30.1490.310">
    <property type="match status" value="1"/>
</dbReference>
<dbReference type="Gene3D" id="3.30.200.20">
    <property type="entry name" value="Phosphorylase Kinase, domain 1"/>
    <property type="match status" value="1"/>
</dbReference>
<dbReference type="Gene3D" id="3.80.10.10">
    <property type="entry name" value="Ribonuclease Inhibitor"/>
    <property type="match status" value="1"/>
</dbReference>
<dbReference type="Gene3D" id="1.10.510.10">
    <property type="entry name" value="Transferase(Phosphotransferase) domain 1"/>
    <property type="match status" value="1"/>
</dbReference>
<dbReference type="InterPro" id="IPR045381">
    <property type="entry name" value="BRI1_island_dom"/>
</dbReference>
<dbReference type="InterPro" id="IPR011009">
    <property type="entry name" value="Kinase-like_dom_sf"/>
</dbReference>
<dbReference type="InterPro" id="IPR001611">
    <property type="entry name" value="Leu-rich_rpt"/>
</dbReference>
<dbReference type="InterPro" id="IPR003591">
    <property type="entry name" value="Leu-rich_rpt_typical-subtyp"/>
</dbReference>
<dbReference type="InterPro" id="IPR032675">
    <property type="entry name" value="LRR_dom_sf"/>
</dbReference>
<dbReference type="InterPro" id="IPR013210">
    <property type="entry name" value="LRR_N_plant-typ"/>
</dbReference>
<dbReference type="InterPro" id="IPR051809">
    <property type="entry name" value="Plant_receptor-like_S/T_kinase"/>
</dbReference>
<dbReference type="InterPro" id="IPR000719">
    <property type="entry name" value="Prot_kinase_dom"/>
</dbReference>
<dbReference type="InterPro" id="IPR017441">
    <property type="entry name" value="Protein_kinase_ATP_BS"/>
</dbReference>
<dbReference type="InterPro" id="IPR008271">
    <property type="entry name" value="Ser/Thr_kinase_AS"/>
</dbReference>
<dbReference type="PANTHER" id="PTHR27008:SF42">
    <property type="entry name" value="LEUCINE-RICH REPEAT PROTEIN KINASE FAMILY PROTEIN"/>
    <property type="match status" value="1"/>
</dbReference>
<dbReference type="PANTHER" id="PTHR27008">
    <property type="entry name" value="OS04G0122200 PROTEIN"/>
    <property type="match status" value="1"/>
</dbReference>
<dbReference type="Pfam" id="PF20141">
    <property type="entry name" value="Island"/>
    <property type="match status" value="1"/>
</dbReference>
<dbReference type="Pfam" id="PF00560">
    <property type="entry name" value="LRR_1"/>
    <property type="match status" value="6"/>
</dbReference>
<dbReference type="Pfam" id="PF13855">
    <property type="entry name" value="LRR_8"/>
    <property type="match status" value="3"/>
</dbReference>
<dbReference type="Pfam" id="PF08263">
    <property type="entry name" value="LRRNT_2"/>
    <property type="match status" value="1"/>
</dbReference>
<dbReference type="Pfam" id="PF00069">
    <property type="entry name" value="Pkinase"/>
    <property type="match status" value="1"/>
</dbReference>
<dbReference type="PRINTS" id="PR00019">
    <property type="entry name" value="LEURICHRPT"/>
</dbReference>
<dbReference type="SMART" id="SM00369">
    <property type="entry name" value="LRR_TYP"/>
    <property type="match status" value="5"/>
</dbReference>
<dbReference type="SMART" id="SM00220">
    <property type="entry name" value="S_TKc"/>
    <property type="match status" value="1"/>
</dbReference>
<dbReference type="SUPFAM" id="SSF52058">
    <property type="entry name" value="L domain-like"/>
    <property type="match status" value="3"/>
</dbReference>
<dbReference type="SUPFAM" id="SSF56112">
    <property type="entry name" value="Protein kinase-like (PK-like)"/>
    <property type="match status" value="1"/>
</dbReference>
<dbReference type="PROSITE" id="PS51450">
    <property type="entry name" value="LRR"/>
    <property type="match status" value="17"/>
</dbReference>
<dbReference type="PROSITE" id="PS00107">
    <property type="entry name" value="PROTEIN_KINASE_ATP"/>
    <property type="match status" value="1"/>
</dbReference>
<dbReference type="PROSITE" id="PS50011">
    <property type="entry name" value="PROTEIN_KINASE_DOM"/>
    <property type="match status" value="1"/>
</dbReference>
<dbReference type="PROSITE" id="PS00108">
    <property type="entry name" value="PROTEIN_KINASE_ST"/>
    <property type="match status" value="1"/>
</dbReference>
<name>BRL2_ARATH</name>
<protein>
    <recommendedName>
        <fullName>Serine/threonine-protein kinase BRI1-like 2</fullName>
        <ecNumber evidence="6 9 11">2.7.11.1</ecNumber>
    </recommendedName>
    <alternativeName>
        <fullName evidence="13">BRASSINOSTEROID INSENSITIVE 1-like protein 2</fullName>
    </alternativeName>
    <alternativeName>
        <fullName evidence="12">Protein VASCULAR HIGHWAY 1</fullName>
    </alternativeName>
</protein>
<reference key="1">
    <citation type="journal article" date="1999" name="Nature">
        <title>Sequence and analysis of chromosome 2 of the plant Arabidopsis thaliana.</title>
        <authorList>
            <person name="Lin X."/>
            <person name="Kaul S."/>
            <person name="Rounsley S.D."/>
            <person name="Shea T.P."/>
            <person name="Benito M.-I."/>
            <person name="Town C.D."/>
            <person name="Fujii C.Y."/>
            <person name="Mason T.M."/>
            <person name="Bowman C.L."/>
            <person name="Barnstead M.E."/>
            <person name="Feldblyum T.V."/>
            <person name="Buell C.R."/>
            <person name="Ketchum K.A."/>
            <person name="Lee J.J."/>
            <person name="Ronning C.M."/>
            <person name="Koo H.L."/>
            <person name="Moffat K.S."/>
            <person name="Cronin L.A."/>
            <person name="Shen M."/>
            <person name="Pai G."/>
            <person name="Van Aken S."/>
            <person name="Umayam L."/>
            <person name="Tallon L.J."/>
            <person name="Gill J.E."/>
            <person name="Adams M.D."/>
            <person name="Carrera A.J."/>
            <person name="Creasy T.H."/>
            <person name="Goodman H.M."/>
            <person name="Somerville C.R."/>
            <person name="Copenhaver G.P."/>
            <person name="Preuss D."/>
            <person name="Nierman W.C."/>
            <person name="White O."/>
            <person name="Eisen J.A."/>
            <person name="Salzberg S.L."/>
            <person name="Fraser C.M."/>
            <person name="Venter J.C."/>
        </authorList>
    </citation>
    <scope>NUCLEOTIDE SEQUENCE [LARGE SCALE GENOMIC DNA]</scope>
    <source>
        <strain>cv. Columbia</strain>
    </source>
</reference>
<reference key="2">
    <citation type="journal article" date="2017" name="Plant J.">
        <title>Araport11: a complete reannotation of the Arabidopsis thaliana reference genome.</title>
        <authorList>
            <person name="Cheng C.Y."/>
            <person name="Krishnakumar V."/>
            <person name="Chan A.P."/>
            <person name="Thibaud-Nissen F."/>
            <person name="Schobel S."/>
            <person name="Town C.D."/>
        </authorList>
    </citation>
    <scope>GENOME REANNOTATION</scope>
    <source>
        <strain>cv. Columbia</strain>
    </source>
</reference>
<reference key="3">
    <citation type="journal article" date="2003" name="Science">
        <title>Empirical analysis of transcriptional activity in the Arabidopsis genome.</title>
        <authorList>
            <person name="Yamada K."/>
            <person name="Lim J."/>
            <person name="Dale J.M."/>
            <person name="Chen H."/>
            <person name="Shinn P."/>
            <person name="Palm C.J."/>
            <person name="Southwick A.M."/>
            <person name="Wu H.C."/>
            <person name="Kim C.J."/>
            <person name="Nguyen M."/>
            <person name="Pham P.K."/>
            <person name="Cheuk R.F."/>
            <person name="Karlin-Newmann G."/>
            <person name="Liu S.X."/>
            <person name="Lam B."/>
            <person name="Sakano H."/>
            <person name="Wu T."/>
            <person name="Yu G."/>
            <person name="Miranda M."/>
            <person name="Quach H.L."/>
            <person name="Tripp M."/>
            <person name="Chang C.H."/>
            <person name="Lee J.M."/>
            <person name="Toriumi M.J."/>
            <person name="Chan M.M."/>
            <person name="Tang C.C."/>
            <person name="Onodera C.S."/>
            <person name="Deng J.M."/>
            <person name="Akiyama K."/>
            <person name="Ansari Y."/>
            <person name="Arakawa T."/>
            <person name="Banh J."/>
            <person name="Banno F."/>
            <person name="Bowser L."/>
            <person name="Brooks S.Y."/>
            <person name="Carninci P."/>
            <person name="Chao Q."/>
            <person name="Choy N."/>
            <person name="Enju A."/>
            <person name="Goldsmith A.D."/>
            <person name="Gurjal M."/>
            <person name="Hansen N.F."/>
            <person name="Hayashizaki Y."/>
            <person name="Johnson-Hopson C."/>
            <person name="Hsuan V.W."/>
            <person name="Iida K."/>
            <person name="Karnes M."/>
            <person name="Khan S."/>
            <person name="Koesema E."/>
            <person name="Ishida J."/>
            <person name="Jiang P.X."/>
            <person name="Jones T."/>
            <person name="Kawai J."/>
            <person name="Kamiya A."/>
            <person name="Meyers C."/>
            <person name="Nakajima M."/>
            <person name="Narusaka M."/>
            <person name="Seki M."/>
            <person name="Sakurai T."/>
            <person name="Satou M."/>
            <person name="Tamse R."/>
            <person name="Vaysberg M."/>
            <person name="Wallender E.K."/>
            <person name="Wong C."/>
            <person name="Yamamura Y."/>
            <person name="Yuan S."/>
            <person name="Shinozaki K."/>
            <person name="Davis R.W."/>
            <person name="Theologis A."/>
            <person name="Ecker J.R."/>
        </authorList>
    </citation>
    <scope>NUCLEOTIDE SEQUENCE [LARGE SCALE MRNA]</scope>
    <source>
        <strain>cv. Columbia</strain>
    </source>
</reference>
<reference key="4">
    <citation type="journal article" date="2002" name="Plant Cell">
        <title>VH1, a provascular cell-specific receptor kinase that influences leaf cell patterns in Arabidopsis.</title>
        <authorList>
            <person name="Clay N.K."/>
            <person name="Nelson T."/>
        </authorList>
    </citation>
    <scope>FUNCTION</scope>
    <scope>TISSUE SPECIFICITY</scope>
    <scope>CATALYTIC ACTIVITY</scope>
</reference>
<reference key="5">
    <citation type="journal article" date="2004" name="Development">
        <title>BRL1 and BRL3 are novel brassinosteroid receptors that function in vascular differentiation in Arabidopsis.</title>
        <authorList>
            <person name="Cano-Delgado A."/>
            <person name="Yin Y."/>
            <person name="Yu C."/>
            <person name="Vafeados D."/>
            <person name="Mora-Garcia S."/>
            <person name="Cheng J.-C."/>
            <person name="Nam K.H."/>
            <person name="Li J."/>
            <person name="Chory J."/>
        </authorList>
    </citation>
    <scope>SUBCELLULAR LOCATION</scope>
    <scope>LACK OF STEROID-BINDING</scope>
</reference>
<reference key="6">
    <citation type="journal article" date="2009" name="Plant J.">
        <title>VH1/BRL2 receptor-like kinase interacts with vascular-specific adaptor proteins VIT and VIK to influence leaf venation.</title>
        <authorList>
            <person name="Ceserani T."/>
            <person name="Trofka A."/>
            <person name="Gandotra N."/>
            <person name="Nelson T."/>
        </authorList>
    </citation>
    <scope>FUNCTION</scope>
    <scope>INTERACTION WITH TTL3</scope>
    <scope>TISSUE SPECIFICITY</scope>
    <scope>CATALYTIC ACTIVITY</scope>
</reference>
<gene>
    <name evidence="13" type="primary">BRL2</name>
    <name evidence="12" type="synonym">VH1</name>
    <name evidence="14" type="ordered locus">At2g01950</name>
    <name evidence="15" type="ORF">F14H20.2</name>
</gene>
<sequence>MTTSPIRVRIRTRIQISFIFLLTHLSQSSSSDQSSLKTDSLSLLSFKTMIQDDPNNILSNWSPRKSPCQFSGVTCLGGRVTEINLSGSGLSGIVSFNAFTSLDSLSVLKLSENFFVLNSTSLLLLPLTLTHLELSSSGLIGTLPENFFSKYSNLISITLSYNNFTGKLPNDLFLSSKKLQTLDLSYNNITGPISGLTIPLSSCVSMTYLDFSGNSISGYISDSLINCTNLKSLNLSYNNFDGQIPKSFGELKLLQSLDLSHNRLTGWIPPEIGDTCRSLQNLRLSYNNFTGVIPESLSSCSWLQSLDLSNNNISGPFPNTILRSFGSLQILLLSNNLISGDFPTSISACKSLRIADFSSNRFSGVIPPDLCPGAASLEELRLPDNLVTGEIPPAISQCSELRTIDLSLNYLNGTIPPEIGNLQKLEQFIAWYNNIAGEIPPEIGKLQNLKDLILNNNQLTGEIPPEFFNCSNIEWVSFTSNRLTGEVPKDFGILSRLAVLQLGNNNFTGEIPPELGKCTTLVWLDLNTNHLTGEIPPRLGRQPGSKALSGLLSGNTMAFVRNVGNSCKGVGGLVEFSGIRPERLLQIPSLKSCDFTRMYSGPILSLFTRYQTIEYLDLSYNQLRGKIPDEIGEMIALQVLELSHNQLSGEIPFTIGQLKNLGVFDASDNRLQGQIPESFSNLSFLVQIDLSNNELTGPIPQRGQLSTLPATQYANNPGLCGVPLPECKNGNNQLPAGTEEGKRAKHGTRAASWANSIVLGVLISAASVCILIVWAIAVRARRRDADDAKMLHSLQAVNSATTWKIEKEKEPLSINVATFQRQLRKLKFSQLIEATNGFSAASMIGHGGFGEVFKATLKDGSSVAIKKLIRLSCQGDREFMAEMETLGKIKHRNLVPLLGYCKIGEERLLVYEFMQYGSLEEVLHGPRTGEKRRILGWEERKKIAKGAAKGLCFLHHNCIPHIIHRDMKSSNVLLDQDMEARVSDFGMARLISALDTHLSVSTLAGTPGYVPPEYYQSFRCTAKGDVYSIGVVMLEILSGKRPTDKEEFGDTNLVGWSKMKAREGKHMEVIDEDLLKEGSSESLNEKEGFEGGVIVKEMLRYLEIALRCVDDFPSKRPNMLQVVASLRELRGSENNSHSHSNSL</sequence>
<organism>
    <name type="scientific">Arabidopsis thaliana</name>
    <name type="common">Mouse-ear cress</name>
    <dbReference type="NCBI Taxonomy" id="3702"/>
    <lineage>
        <taxon>Eukaryota</taxon>
        <taxon>Viridiplantae</taxon>
        <taxon>Streptophyta</taxon>
        <taxon>Embryophyta</taxon>
        <taxon>Tracheophyta</taxon>
        <taxon>Spermatophyta</taxon>
        <taxon>Magnoliopsida</taxon>
        <taxon>eudicotyledons</taxon>
        <taxon>Gunneridae</taxon>
        <taxon>Pentapetalae</taxon>
        <taxon>rosids</taxon>
        <taxon>malvids</taxon>
        <taxon>Brassicales</taxon>
        <taxon>Brassicaceae</taxon>
        <taxon>Camelineae</taxon>
        <taxon>Arabidopsis</taxon>
    </lineage>
</organism>
<comment type="function">
    <text evidence="9 11">Receptor with a serine/threonine-protein kinase activity, which may transduce extracellular spatial and temporal signals into downstream cell differentiation responses in provascular and procambial cells. In contrast to BRI1, BRL1 and BRL3, it does not bind brassinolide.</text>
</comment>
<comment type="catalytic activity">
    <reaction evidence="9 11">
        <text>L-seryl-[protein] + ATP = O-phospho-L-seryl-[protein] + ADP + H(+)</text>
        <dbReference type="Rhea" id="RHEA:17989"/>
        <dbReference type="Rhea" id="RHEA-COMP:9863"/>
        <dbReference type="Rhea" id="RHEA-COMP:11604"/>
        <dbReference type="ChEBI" id="CHEBI:15378"/>
        <dbReference type="ChEBI" id="CHEBI:29999"/>
        <dbReference type="ChEBI" id="CHEBI:30616"/>
        <dbReference type="ChEBI" id="CHEBI:83421"/>
        <dbReference type="ChEBI" id="CHEBI:456216"/>
        <dbReference type="EC" id="2.7.11.1"/>
    </reaction>
</comment>
<comment type="catalytic activity">
    <reaction evidence="9 11">
        <text>L-threonyl-[protein] + ATP = O-phospho-L-threonyl-[protein] + ADP + H(+)</text>
        <dbReference type="Rhea" id="RHEA:46608"/>
        <dbReference type="Rhea" id="RHEA-COMP:11060"/>
        <dbReference type="Rhea" id="RHEA-COMP:11605"/>
        <dbReference type="ChEBI" id="CHEBI:15378"/>
        <dbReference type="ChEBI" id="CHEBI:30013"/>
        <dbReference type="ChEBI" id="CHEBI:30616"/>
        <dbReference type="ChEBI" id="CHEBI:61977"/>
        <dbReference type="ChEBI" id="CHEBI:456216"/>
        <dbReference type="EC" id="2.7.11.1"/>
    </reaction>
</comment>
<comment type="subunit">
    <text evidence="11">Interacts with TTL3.</text>
</comment>
<comment type="interaction">
    <interactant intactId="EBI-2292728">
        <id>Q9ZPS9</id>
    </interactant>
    <interactant intactId="EBI-20651261">
        <id>Q9SHI2</id>
        <label>At1g17230</label>
    </interactant>
    <organismsDiffer>false</organismsDiffer>
    <experiments>4</experiments>
</comment>
<comment type="interaction">
    <interactant intactId="EBI-2292728">
        <id>Q9ZPS9</id>
    </interactant>
    <interactant intactId="EBI-20652336">
        <id>A0A178WLG7</id>
        <label>At1g51790</label>
    </interactant>
    <organismsDiffer>false</organismsDiffer>
    <experiments>3</experiments>
</comment>
<comment type="interaction">
    <interactant intactId="EBI-2292728">
        <id>Q9ZPS9</id>
    </interactant>
    <interactant intactId="EBI-20653325">
        <id>O65440-2</id>
        <label>BAM3</label>
    </interactant>
    <organismsDiffer>false</organismsDiffer>
    <experiments>2</experiments>
</comment>
<comment type="interaction">
    <interactant intactId="EBI-2292728">
        <id>Q9ZPS9</id>
    </interactant>
    <interactant intactId="EBI-20660903">
        <id>Q9LHP4</id>
        <label>RGI1</label>
    </interactant>
    <organismsDiffer>false</organismsDiffer>
    <experiments>4</experiments>
</comment>
<comment type="interaction">
    <interactant intactId="EBI-2292728">
        <id>Q9ZPS9</id>
    </interactant>
    <interactant intactId="EBI-2292882">
        <id>Q9SIN1</id>
        <label>TTL3</label>
    </interactant>
    <organismsDiffer>false</organismsDiffer>
    <experiments>2</experiments>
</comment>
<comment type="interaction">
    <interactant intactId="EBI-2292728">
        <id>Q9ZPS9</id>
    </interactant>
    <interactant intactId="EBI-2292778">
        <id>Q9XI87</id>
        <label>VIK</label>
    </interactant>
    <organismsDiffer>false</organismsDiffer>
    <experiments>2</experiments>
</comment>
<comment type="subcellular location">
    <subcellularLocation>
        <location evidence="10">Cell membrane</location>
        <topology evidence="10">Single-pass type I membrane protein</topology>
    </subcellularLocation>
</comment>
<comment type="tissue specificity">
    <text evidence="9 11">Expressed in provascular and procambial sites throughout plant development. Expressed throughout globe- to heart-staged embryos. Then, it is restricted to procambial cells by the late torpedo stage, and this pattern persists throughout the duration of embryo development. After germination, it is expressed not only in procambial cells throughout the plant but also in all lateral organ primordia before the onset of vascularization.</text>
</comment>
<comment type="domain">
    <text evidence="1">Contains two pairs of conservatively spaced Cys (Cys pair 1 and 2) possibly involved in forming some heterodimers.</text>
</comment>
<comment type="similarity">
    <text evidence="6">Belongs to the protein kinase superfamily. Ser/Thr protein kinase family.</text>
</comment>
<proteinExistence type="evidence at protein level"/>
<keyword id="KW-0067">ATP-binding</keyword>
<keyword id="KW-1003">Cell membrane</keyword>
<keyword id="KW-0325">Glycoprotein</keyword>
<keyword id="KW-0418">Kinase</keyword>
<keyword id="KW-0433">Leucine-rich repeat</keyword>
<keyword id="KW-0472">Membrane</keyword>
<keyword id="KW-0547">Nucleotide-binding</keyword>
<keyword id="KW-0597">Phosphoprotein</keyword>
<keyword id="KW-0675">Receptor</keyword>
<keyword id="KW-1185">Reference proteome</keyword>
<keyword id="KW-0677">Repeat</keyword>
<keyword id="KW-0723">Serine/threonine-protein kinase</keyword>
<keyword id="KW-0732">Signal</keyword>
<keyword id="KW-0808">Transferase</keyword>
<keyword id="KW-0812">Transmembrane</keyword>
<keyword id="KW-1133">Transmembrane helix</keyword>
<evidence type="ECO:0000250" key="1"/>
<evidence type="ECO:0000250" key="2">
    <source>
        <dbReference type="UniProtKB" id="C0LGT6"/>
    </source>
</evidence>
<evidence type="ECO:0000250" key="3">
    <source>
        <dbReference type="UniProtKB" id="O22476"/>
    </source>
</evidence>
<evidence type="ECO:0000250" key="4">
    <source>
        <dbReference type="UniProtKB" id="Q9M0G7"/>
    </source>
</evidence>
<evidence type="ECO:0000255" key="5"/>
<evidence type="ECO:0000255" key="6">
    <source>
        <dbReference type="PROSITE-ProRule" id="PRU00159"/>
    </source>
</evidence>
<evidence type="ECO:0000255" key="7">
    <source>
        <dbReference type="PROSITE-ProRule" id="PRU00498"/>
    </source>
</evidence>
<evidence type="ECO:0000255" key="8">
    <source>
        <dbReference type="PROSITE-ProRule" id="PRU10027"/>
    </source>
</evidence>
<evidence type="ECO:0000269" key="9">
    <source>
    </source>
</evidence>
<evidence type="ECO:0000269" key="10">
    <source>
    </source>
</evidence>
<evidence type="ECO:0000269" key="11">
    <source>
    </source>
</evidence>
<evidence type="ECO:0000303" key="12">
    <source>
    </source>
</evidence>
<evidence type="ECO:0000303" key="13">
    <source>
    </source>
</evidence>
<evidence type="ECO:0000312" key="14">
    <source>
        <dbReference type="Araport" id="AT2G01950"/>
    </source>
</evidence>
<evidence type="ECO:0000312" key="15">
    <source>
        <dbReference type="EMBL" id="AAD20088.1"/>
    </source>
</evidence>
<accession>Q9ZPS9</accession>